<evidence type="ECO:0000255" key="1">
    <source>
        <dbReference type="HAMAP-Rule" id="MF_01318"/>
    </source>
</evidence>
<evidence type="ECO:0000305" key="2"/>
<proteinExistence type="inferred from homology"/>
<dbReference type="EMBL" id="CP000512">
    <property type="protein sequence ID" value="ABM35071.1"/>
    <property type="molecule type" value="Genomic_DNA"/>
</dbReference>
<dbReference type="RefSeq" id="WP_011797540.1">
    <property type="nucleotide sequence ID" value="NC_008752.1"/>
</dbReference>
<dbReference type="SMR" id="A1TVT3"/>
<dbReference type="STRING" id="397945.Aave_4534"/>
<dbReference type="GeneID" id="79789513"/>
<dbReference type="KEGG" id="aav:Aave_4534"/>
<dbReference type="eggNOG" id="COG0081">
    <property type="taxonomic scope" value="Bacteria"/>
</dbReference>
<dbReference type="HOGENOM" id="CLU_062853_0_0_4"/>
<dbReference type="OrthoDB" id="9803740at2"/>
<dbReference type="Proteomes" id="UP000002596">
    <property type="component" value="Chromosome"/>
</dbReference>
<dbReference type="GO" id="GO:0022625">
    <property type="term" value="C:cytosolic large ribosomal subunit"/>
    <property type="evidence" value="ECO:0007669"/>
    <property type="project" value="TreeGrafter"/>
</dbReference>
<dbReference type="GO" id="GO:0019843">
    <property type="term" value="F:rRNA binding"/>
    <property type="evidence" value="ECO:0007669"/>
    <property type="project" value="UniProtKB-UniRule"/>
</dbReference>
<dbReference type="GO" id="GO:0003735">
    <property type="term" value="F:structural constituent of ribosome"/>
    <property type="evidence" value="ECO:0007669"/>
    <property type="project" value="InterPro"/>
</dbReference>
<dbReference type="GO" id="GO:0000049">
    <property type="term" value="F:tRNA binding"/>
    <property type="evidence" value="ECO:0007669"/>
    <property type="project" value="UniProtKB-KW"/>
</dbReference>
<dbReference type="GO" id="GO:0006417">
    <property type="term" value="P:regulation of translation"/>
    <property type="evidence" value="ECO:0007669"/>
    <property type="project" value="UniProtKB-KW"/>
</dbReference>
<dbReference type="GO" id="GO:0006412">
    <property type="term" value="P:translation"/>
    <property type="evidence" value="ECO:0007669"/>
    <property type="project" value="UniProtKB-UniRule"/>
</dbReference>
<dbReference type="CDD" id="cd00403">
    <property type="entry name" value="Ribosomal_L1"/>
    <property type="match status" value="1"/>
</dbReference>
<dbReference type="FunFam" id="3.40.50.790:FF:000001">
    <property type="entry name" value="50S ribosomal protein L1"/>
    <property type="match status" value="1"/>
</dbReference>
<dbReference type="Gene3D" id="3.30.190.20">
    <property type="match status" value="1"/>
</dbReference>
<dbReference type="Gene3D" id="3.40.50.790">
    <property type="match status" value="1"/>
</dbReference>
<dbReference type="HAMAP" id="MF_01318_B">
    <property type="entry name" value="Ribosomal_uL1_B"/>
    <property type="match status" value="1"/>
</dbReference>
<dbReference type="InterPro" id="IPR005878">
    <property type="entry name" value="Ribosom_uL1_bac-type"/>
</dbReference>
<dbReference type="InterPro" id="IPR002143">
    <property type="entry name" value="Ribosomal_uL1"/>
</dbReference>
<dbReference type="InterPro" id="IPR023674">
    <property type="entry name" value="Ribosomal_uL1-like"/>
</dbReference>
<dbReference type="InterPro" id="IPR028364">
    <property type="entry name" value="Ribosomal_uL1/biogenesis"/>
</dbReference>
<dbReference type="InterPro" id="IPR016095">
    <property type="entry name" value="Ribosomal_uL1_3-a/b-sand"/>
</dbReference>
<dbReference type="InterPro" id="IPR023673">
    <property type="entry name" value="Ribosomal_uL1_CS"/>
</dbReference>
<dbReference type="NCBIfam" id="TIGR01169">
    <property type="entry name" value="rplA_bact"/>
    <property type="match status" value="1"/>
</dbReference>
<dbReference type="PANTHER" id="PTHR36427">
    <property type="entry name" value="54S RIBOSOMAL PROTEIN L1, MITOCHONDRIAL"/>
    <property type="match status" value="1"/>
</dbReference>
<dbReference type="PANTHER" id="PTHR36427:SF3">
    <property type="entry name" value="LARGE RIBOSOMAL SUBUNIT PROTEIN UL1M"/>
    <property type="match status" value="1"/>
</dbReference>
<dbReference type="Pfam" id="PF00687">
    <property type="entry name" value="Ribosomal_L1"/>
    <property type="match status" value="1"/>
</dbReference>
<dbReference type="PIRSF" id="PIRSF002155">
    <property type="entry name" value="Ribosomal_L1"/>
    <property type="match status" value="1"/>
</dbReference>
<dbReference type="SUPFAM" id="SSF56808">
    <property type="entry name" value="Ribosomal protein L1"/>
    <property type="match status" value="1"/>
</dbReference>
<dbReference type="PROSITE" id="PS01199">
    <property type="entry name" value="RIBOSOMAL_L1"/>
    <property type="match status" value="1"/>
</dbReference>
<protein>
    <recommendedName>
        <fullName evidence="1">Large ribosomal subunit protein uL1</fullName>
    </recommendedName>
    <alternativeName>
        <fullName evidence="2">50S ribosomal protein L1</fullName>
    </alternativeName>
</protein>
<reference key="1">
    <citation type="submission" date="2006-12" db="EMBL/GenBank/DDBJ databases">
        <title>Complete sequence of Acidovorax avenae subsp. citrulli AAC00-1.</title>
        <authorList>
            <person name="Copeland A."/>
            <person name="Lucas S."/>
            <person name="Lapidus A."/>
            <person name="Barry K."/>
            <person name="Detter J.C."/>
            <person name="Glavina del Rio T."/>
            <person name="Dalin E."/>
            <person name="Tice H."/>
            <person name="Pitluck S."/>
            <person name="Kiss H."/>
            <person name="Brettin T."/>
            <person name="Bruce D."/>
            <person name="Han C."/>
            <person name="Tapia R."/>
            <person name="Gilna P."/>
            <person name="Schmutz J."/>
            <person name="Larimer F."/>
            <person name="Land M."/>
            <person name="Hauser L."/>
            <person name="Kyrpides N."/>
            <person name="Kim E."/>
            <person name="Stahl D."/>
            <person name="Richardson P."/>
        </authorList>
    </citation>
    <scope>NUCLEOTIDE SEQUENCE [LARGE SCALE GENOMIC DNA]</scope>
    <source>
        <strain>AAC00-1</strain>
    </source>
</reference>
<name>RL1_PARC0</name>
<comment type="function">
    <text evidence="1">Binds directly to 23S rRNA. The L1 stalk is quite mobile in the ribosome, and is involved in E site tRNA release.</text>
</comment>
<comment type="function">
    <text evidence="1">Protein L1 is also a translational repressor protein, it controls the translation of the L11 operon by binding to its mRNA.</text>
</comment>
<comment type="subunit">
    <text evidence="1">Part of the 50S ribosomal subunit.</text>
</comment>
<comment type="similarity">
    <text evidence="1">Belongs to the universal ribosomal protein uL1 family.</text>
</comment>
<organism>
    <name type="scientific">Paracidovorax citrulli (strain AAC00-1)</name>
    <name type="common">Acidovorax citrulli</name>
    <dbReference type="NCBI Taxonomy" id="397945"/>
    <lineage>
        <taxon>Bacteria</taxon>
        <taxon>Pseudomonadati</taxon>
        <taxon>Pseudomonadota</taxon>
        <taxon>Betaproteobacteria</taxon>
        <taxon>Burkholderiales</taxon>
        <taxon>Comamonadaceae</taxon>
        <taxon>Paracidovorax</taxon>
    </lineage>
</organism>
<sequence>MAKLTKKQKALQGKVDSTKLYAFADAVVLVKEAATAKFDESIDVAVQLGIDAKKSDQVVRGAVVLPNGTGKTTRVAVFAQGAKAEEAKAAGADVVGMDDLAAQVKAGDMPFDVVIAAPDAMRVVGTLGQILGPRGLMPNPKVGTVTPDVATAVKNAKAGQVQFRVDKAGIIHSTIGRRSFDNDKLQGNLVALIEALNKAKPATSKGLYLRKVAVSSTMGVGVRVDTQSISA</sequence>
<accession>A1TVT3</accession>
<gene>
    <name evidence="1" type="primary">rplA</name>
    <name type="ordered locus">Aave_4534</name>
</gene>
<keyword id="KW-0678">Repressor</keyword>
<keyword id="KW-0687">Ribonucleoprotein</keyword>
<keyword id="KW-0689">Ribosomal protein</keyword>
<keyword id="KW-0694">RNA-binding</keyword>
<keyword id="KW-0699">rRNA-binding</keyword>
<keyword id="KW-0810">Translation regulation</keyword>
<keyword id="KW-0820">tRNA-binding</keyword>
<feature type="chain" id="PRO_0000307950" description="Large ribosomal subunit protein uL1">
    <location>
        <begin position="1"/>
        <end position="231"/>
    </location>
</feature>